<gene>
    <name type="ordered locus">MTH_785</name>
</gene>
<keyword id="KW-0067">ATP-binding</keyword>
<keyword id="KW-1003">Cell membrane</keyword>
<keyword id="KW-0378">Hydrolase</keyword>
<keyword id="KW-0472">Membrane</keyword>
<keyword id="KW-0547">Nucleotide-binding</keyword>
<keyword id="KW-0645">Protease</keyword>
<keyword id="KW-1185">Reference proteome</keyword>
<keyword id="KW-0720">Serine protease</keyword>
<keyword id="KW-0812">Transmembrane</keyword>
<keyword id="KW-1133">Transmembrane helix</keyword>
<comment type="function">
    <text evidence="1">ATP-dependent serine protease that mediates the selective degradation of mutant and abnormal proteins as well as certain short-lived regulatory proteins. Degrades polypeptides processively (By similarity).</text>
</comment>
<comment type="subunit">
    <text evidence="1">Homohexamer. Organized in a ring with a central cavity (By similarity).</text>
</comment>
<comment type="subcellular location">
    <subcellularLocation>
        <location evidence="1">Cell membrane</location>
        <topology evidence="5">Multi-pass membrane protein</topology>
    </subcellularLocation>
</comment>
<comment type="similarity">
    <text evidence="5">Belongs to the peptidase S16 family. Archaeal LonB subfamily.</text>
</comment>
<protein>
    <recommendedName>
        <fullName>Archaeal Lon protease</fullName>
        <ecNumber>3.4.21.-</ecNumber>
    </recommendedName>
    <alternativeName>
        <fullName>ATP-dependent protease La homolog</fullName>
    </alternativeName>
</protein>
<accession>O26878</accession>
<name>LONB_METTH</name>
<reference key="1">
    <citation type="journal article" date="1997" name="J. Bacteriol.">
        <title>Complete genome sequence of Methanobacterium thermoautotrophicum deltaH: functional analysis and comparative genomics.</title>
        <authorList>
            <person name="Smith D.R."/>
            <person name="Doucette-Stamm L.A."/>
            <person name="Deloughery C."/>
            <person name="Lee H.-M."/>
            <person name="Dubois J."/>
            <person name="Aldredge T."/>
            <person name="Bashirzadeh R."/>
            <person name="Blakely D."/>
            <person name="Cook R."/>
            <person name="Gilbert K."/>
            <person name="Harrison D."/>
            <person name="Hoang L."/>
            <person name="Keagle P."/>
            <person name="Lumm W."/>
            <person name="Pothier B."/>
            <person name="Qiu D."/>
            <person name="Spadafora R."/>
            <person name="Vicare R."/>
            <person name="Wang Y."/>
            <person name="Wierzbowski J."/>
            <person name="Gibson R."/>
            <person name="Jiwani N."/>
            <person name="Caruso A."/>
            <person name="Bush D."/>
            <person name="Safer H."/>
            <person name="Patwell D."/>
            <person name="Prabhakar S."/>
            <person name="McDougall S."/>
            <person name="Shimer G."/>
            <person name="Goyal A."/>
            <person name="Pietrovski S."/>
            <person name="Church G.M."/>
            <person name="Daniels C.J."/>
            <person name="Mao J.-I."/>
            <person name="Rice P."/>
            <person name="Noelling J."/>
            <person name="Reeve J.N."/>
        </authorList>
    </citation>
    <scope>NUCLEOTIDE SEQUENCE [LARGE SCALE GENOMIC DNA]</scope>
    <source>
        <strain>ATCC 29096 / DSM 1053 / JCM 10044 / NBRC 100330 / Delta H</strain>
    </source>
</reference>
<evidence type="ECO:0000250" key="1"/>
<evidence type="ECO:0000255" key="2"/>
<evidence type="ECO:0000255" key="3">
    <source>
        <dbReference type="PROSITE-ProRule" id="PRU01122"/>
    </source>
</evidence>
<evidence type="ECO:0000256" key="4">
    <source>
        <dbReference type="SAM" id="MobiDB-lite"/>
    </source>
</evidence>
<evidence type="ECO:0000305" key="5"/>
<organism>
    <name type="scientific">Methanothermobacter thermautotrophicus (strain ATCC 29096 / DSM 1053 / JCM 10044 / NBRC 100330 / Delta H)</name>
    <name type="common">Methanobacterium thermoautotrophicum</name>
    <dbReference type="NCBI Taxonomy" id="187420"/>
    <lineage>
        <taxon>Archaea</taxon>
        <taxon>Methanobacteriati</taxon>
        <taxon>Methanobacteriota</taxon>
        <taxon>Methanomada group</taxon>
        <taxon>Methanobacteria</taxon>
        <taxon>Methanobacteriales</taxon>
        <taxon>Methanobacteriaceae</taxon>
        <taxon>Methanothermobacter</taxon>
    </lineage>
</organism>
<feature type="chain" id="PRO_0000076153" description="Archaeal Lon protease">
    <location>
        <begin position="1"/>
        <end position="644"/>
    </location>
</feature>
<feature type="topological domain" description="Cytoplasmic" evidence="2">
    <location>
        <begin position="1"/>
        <end position="137"/>
    </location>
</feature>
<feature type="transmembrane region" description="Helical" evidence="2">
    <location>
        <begin position="138"/>
        <end position="155"/>
    </location>
</feature>
<feature type="transmembrane region" description="Helical" evidence="2">
    <location>
        <begin position="156"/>
        <end position="171"/>
    </location>
</feature>
<feature type="topological domain" description="Cytoplasmic" evidence="2">
    <location>
        <begin position="172"/>
        <end position="644"/>
    </location>
</feature>
<feature type="domain" description="Lon proteolytic" evidence="3">
    <location>
        <begin position="438"/>
        <end position="617"/>
    </location>
</feature>
<feature type="region of interest" description="Disordered" evidence="4">
    <location>
        <begin position="1"/>
        <end position="30"/>
    </location>
</feature>
<feature type="compositionally biased region" description="Polar residues" evidence="4">
    <location>
        <begin position="1"/>
        <end position="18"/>
    </location>
</feature>
<feature type="active site" evidence="1">
    <location>
        <position position="524"/>
    </location>
</feature>
<feature type="active site" evidence="1">
    <location>
        <position position="567"/>
    </location>
</feature>
<feature type="binding site" evidence="2">
    <location>
        <begin position="71"/>
        <end position="78"/>
    </location>
    <ligand>
        <name>ATP</name>
        <dbReference type="ChEBI" id="CHEBI:30616"/>
    </ligand>
</feature>
<dbReference type="EC" id="3.4.21.-"/>
<dbReference type="EMBL" id="AE000666">
    <property type="protein sequence ID" value="AAB85287.1"/>
    <property type="molecule type" value="Genomic_DNA"/>
</dbReference>
<dbReference type="PIR" id="H69204">
    <property type="entry name" value="H69204"/>
</dbReference>
<dbReference type="SMR" id="O26878"/>
<dbReference type="STRING" id="187420.MTH_785"/>
<dbReference type="MEROPS" id="S16.005"/>
<dbReference type="PaxDb" id="187420-MTH_785"/>
<dbReference type="EnsemblBacteria" id="AAB85287">
    <property type="protein sequence ID" value="AAB85287"/>
    <property type="gene ID" value="MTH_785"/>
</dbReference>
<dbReference type="KEGG" id="mth:MTH_785"/>
<dbReference type="PATRIC" id="fig|187420.15.peg.772"/>
<dbReference type="HOGENOM" id="CLU_392630_0_0_2"/>
<dbReference type="InParanoid" id="O26878"/>
<dbReference type="Proteomes" id="UP000005223">
    <property type="component" value="Chromosome"/>
</dbReference>
<dbReference type="GO" id="GO:0005886">
    <property type="term" value="C:plasma membrane"/>
    <property type="evidence" value="ECO:0007669"/>
    <property type="project" value="UniProtKB-SubCell"/>
</dbReference>
<dbReference type="GO" id="GO:0005524">
    <property type="term" value="F:ATP binding"/>
    <property type="evidence" value="ECO:0007669"/>
    <property type="project" value="UniProtKB-KW"/>
</dbReference>
<dbReference type="GO" id="GO:0016887">
    <property type="term" value="F:ATP hydrolysis activity"/>
    <property type="evidence" value="ECO:0007669"/>
    <property type="project" value="InterPro"/>
</dbReference>
<dbReference type="GO" id="GO:0004176">
    <property type="term" value="F:ATP-dependent peptidase activity"/>
    <property type="evidence" value="ECO:0007669"/>
    <property type="project" value="InterPro"/>
</dbReference>
<dbReference type="GO" id="GO:0004252">
    <property type="term" value="F:serine-type endopeptidase activity"/>
    <property type="evidence" value="ECO:0007669"/>
    <property type="project" value="InterPro"/>
</dbReference>
<dbReference type="GO" id="GO:0030163">
    <property type="term" value="P:protein catabolic process"/>
    <property type="evidence" value="ECO:0007669"/>
    <property type="project" value="InterPro"/>
</dbReference>
<dbReference type="GO" id="GO:0006508">
    <property type="term" value="P:proteolysis"/>
    <property type="evidence" value="ECO:0007669"/>
    <property type="project" value="UniProtKB-KW"/>
</dbReference>
<dbReference type="GO" id="GO:0006355">
    <property type="term" value="P:regulation of DNA-templated transcription"/>
    <property type="evidence" value="ECO:0007669"/>
    <property type="project" value="InterPro"/>
</dbReference>
<dbReference type="CDD" id="cd00009">
    <property type="entry name" value="AAA"/>
    <property type="match status" value="1"/>
</dbReference>
<dbReference type="Gene3D" id="1.10.8.60">
    <property type="match status" value="1"/>
</dbReference>
<dbReference type="Gene3D" id="3.30.230.10">
    <property type="match status" value="1"/>
</dbReference>
<dbReference type="Gene3D" id="3.40.50.300">
    <property type="entry name" value="P-loop containing nucleotide triphosphate hydrolases"/>
    <property type="match status" value="1"/>
</dbReference>
<dbReference type="InterPro" id="IPR003593">
    <property type="entry name" value="AAA+_ATPase"/>
</dbReference>
<dbReference type="InterPro" id="IPR004663">
    <property type="entry name" value="Lon_arc"/>
</dbReference>
<dbReference type="InterPro" id="IPR008269">
    <property type="entry name" value="Lon_proteolytic"/>
</dbReference>
<dbReference type="InterPro" id="IPR027065">
    <property type="entry name" value="Lon_Prtase"/>
</dbReference>
<dbReference type="InterPro" id="IPR046843">
    <property type="entry name" value="LonB_AAA-LID"/>
</dbReference>
<dbReference type="InterPro" id="IPR000523">
    <property type="entry name" value="Mg_chelatse_chII-like_cat_dom"/>
</dbReference>
<dbReference type="InterPro" id="IPR027417">
    <property type="entry name" value="P-loop_NTPase"/>
</dbReference>
<dbReference type="InterPro" id="IPR020568">
    <property type="entry name" value="Ribosomal_Su5_D2-typ_SF"/>
</dbReference>
<dbReference type="InterPro" id="IPR014721">
    <property type="entry name" value="Ribsml_uS5_D2-typ_fold_subgr"/>
</dbReference>
<dbReference type="InterPro" id="IPR002078">
    <property type="entry name" value="Sigma_54_int"/>
</dbReference>
<dbReference type="NCBIfam" id="TIGR00764">
    <property type="entry name" value="lon_rel"/>
    <property type="match status" value="1"/>
</dbReference>
<dbReference type="PANTHER" id="PTHR10046">
    <property type="entry name" value="ATP DEPENDENT LON PROTEASE FAMILY MEMBER"/>
    <property type="match status" value="1"/>
</dbReference>
<dbReference type="Pfam" id="PF05362">
    <property type="entry name" value="Lon_C"/>
    <property type="match status" value="1"/>
</dbReference>
<dbReference type="Pfam" id="PF20436">
    <property type="entry name" value="LonB_AAA-LID"/>
    <property type="match status" value="1"/>
</dbReference>
<dbReference type="Pfam" id="PF01078">
    <property type="entry name" value="Mg_chelatase"/>
    <property type="match status" value="1"/>
</dbReference>
<dbReference type="Pfam" id="PF00158">
    <property type="entry name" value="Sigma54_activat"/>
    <property type="match status" value="1"/>
</dbReference>
<dbReference type="PRINTS" id="PR00830">
    <property type="entry name" value="ENDOLAPTASE"/>
</dbReference>
<dbReference type="SMART" id="SM00382">
    <property type="entry name" value="AAA"/>
    <property type="match status" value="1"/>
</dbReference>
<dbReference type="SUPFAM" id="SSF52540">
    <property type="entry name" value="P-loop containing nucleoside triphosphate hydrolases"/>
    <property type="match status" value="1"/>
</dbReference>
<dbReference type="SUPFAM" id="SSF54211">
    <property type="entry name" value="Ribosomal protein S5 domain 2-like"/>
    <property type="match status" value="1"/>
</dbReference>
<dbReference type="PROSITE" id="PS51786">
    <property type="entry name" value="LON_PROTEOLYTIC"/>
    <property type="match status" value="1"/>
</dbReference>
<proteinExistence type="inferred from homology"/>
<sequence length="644" mass="70212">MKTTIKNSRTQESVSYEGNETKKGTGETLSYETSKDIEVPERLIDQIIGQEEAVETIKKAAEQRRNVLLIGEPGVGKSMLAKAMAELLPREQLQDILVYPNIEDPNNPLIGAVPAGEGRKIVMNHKNKARSQDEKKNLFMMLIISFILVLGFMMNQFLAAIIAAGIIFLALQQFRPRTTVMVPKLLVNNEGRQVAPFVDATGAHAGALLGDVRHDPYQSGGLGTPAHERVEAGMIHKANKGVLYIDEIGTMKMKTQQELLTAMQEKRYSITGQSETSSGAMVRSQAVPCDFVLVASGNLQVLEGMHPALRSRIRGYGYEVFMKDTMPDTPENRDKLVQFVAQEVEKDGRIPHFSREAVEEIIREAQRRAGKKDSLTLKLRELGGLVRAAGDIAKSRGAELVETEDVIEAKKLSRTLEQQIADRYIVQKKKYSVFKSEGGEVGRVNGLAIIGDRSGIILPIAAEAAPAQSKEEGRIIATGKLGEIAREAVQNVSALIKKYTGTDISNYDIHIQFLQAYDGVEGDSASVSVATAVISALEEIPVDQSVALTGSLSIRGDVLPVGGVTGKIEAAAEAGIRKVLIPASNMGDVMIEKKYEDMVEIVPVETLGDVLEHALIGKGKESLIQRMQKISDIVPSIMKKPAMH</sequence>